<sequence>MKFAVILLFSLVVLAVASESVEEVRREIDIEDLPEQQRGCADLRQPCTEGDDCSCCGREGVCNCSHPHKKGCYCKTAGPLEKLAKKFKGCKNK</sequence>
<evidence type="ECO:0000250" key="1"/>
<evidence type="ECO:0000255" key="2"/>
<evidence type="ECO:0000305" key="3"/>
<feature type="signal peptide" evidence="2">
    <location>
        <begin position="1"/>
        <end position="18"/>
    </location>
</feature>
<feature type="propeptide" id="PRO_0000401849" evidence="1">
    <location>
        <begin position="19"/>
        <end position="38"/>
    </location>
</feature>
<feature type="chain" id="PRO_0000401850" description="U12-lycotoxin-Ls1c">
    <location>
        <begin position="39"/>
        <end position="93"/>
    </location>
</feature>
<comment type="subcellular location">
    <subcellularLocation>
        <location evidence="1">Secreted</location>
    </subcellularLocation>
</comment>
<comment type="tissue specificity">
    <text>Expressed by the venom gland.</text>
</comment>
<comment type="PTM">
    <text evidence="3">Contains 5 disulfide bonds.</text>
</comment>
<comment type="similarity">
    <text evidence="3">Belongs to the neurotoxin 31 family.</text>
</comment>
<dbReference type="EMBL" id="EU926099">
    <property type="protein sequence ID" value="ACI41431.1"/>
    <property type="molecule type" value="mRNA"/>
</dbReference>
<dbReference type="EMBL" id="FM864103">
    <property type="protein sequence ID" value="CAS03700.1"/>
    <property type="molecule type" value="mRNA"/>
</dbReference>
<dbReference type="SMR" id="B6DD15"/>
<dbReference type="ArachnoServer" id="AS001038">
    <property type="toxin name" value="U12-lycotoxin-Ls1c"/>
</dbReference>
<dbReference type="GO" id="GO:0005576">
    <property type="term" value="C:extracellular region"/>
    <property type="evidence" value="ECO:0007669"/>
    <property type="project" value="UniProtKB-SubCell"/>
</dbReference>
<dbReference type="GO" id="GO:0090729">
    <property type="term" value="F:toxin activity"/>
    <property type="evidence" value="ECO:0007669"/>
    <property type="project" value="UniProtKB-KW"/>
</dbReference>
<keyword id="KW-1015">Disulfide bond</keyword>
<keyword id="KW-0964">Secreted</keyword>
<keyword id="KW-0732">Signal</keyword>
<keyword id="KW-0800">Toxin</keyword>
<reference key="1">
    <citation type="journal article" date="2010" name="Zoology">
        <title>Transcriptome analysis of the venom glands of the Chinese wolf spider Lycosa singoriensis.</title>
        <authorList>
            <person name="Zhang Y."/>
            <person name="Chen J."/>
            <person name="Tang X."/>
            <person name="Wang F."/>
            <person name="Jiang L."/>
            <person name="Xiong X."/>
            <person name="Wang M."/>
            <person name="Rong M."/>
            <person name="Liu Z."/>
            <person name="Liang S."/>
        </authorList>
    </citation>
    <scope>NUCLEOTIDE SEQUENCE [LARGE SCALE MRNA]</scope>
    <source>
        <tissue>Venom gland</tissue>
    </source>
</reference>
<name>TXC03_LYCSI</name>
<protein>
    <recommendedName>
        <fullName>U12-lycotoxin-Ls1c</fullName>
    </recommendedName>
    <alternativeName>
        <fullName>Toxin-like structure LSTX-K3</fullName>
    </alternativeName>
</protein>
<organism>
    <name type="scientific">Lycosa singoriensis</name>
    <name type="common">Wolf spider</name>
    <name type="synonym">Aranea singoriensis</name>
    <dbReference type="NCBI Taxonomy" id="434756"/>
    <lineage>
        <taxon>Eukaryota</taxon>
        <taxon>Metazoa</taxon>
        <taxon>Ecdysozoa</taxon>
        <taxon>Arthropoda</taxon>
        <taxon>Chelicerata</taxon>
        <taxon>Arachnida</taxon>
        <taxon>Araneae</taxon>
        <taxon>Araneomorphae</taxon>
        <taxon>Entelegynae</taxon>
        <taxon>Lycosoidea</taxon>
        <taxon>Lycosidae</taxon>
        <taxon>Lycosa</taxon>
    </lineage>
</organism>
<accession>B6DD15</accession>
<proteinExistence type="evidence at transcript level"/>